<sequence length="496" mass="54338">MNMGVDKKQNTVLYISSAIALLFVLWGVFLPENMANVVNKVFALLTTNFGWLYLLAVAIFIIFVFGIAISRYGKIKLGADDDKPEFSNFQWFAMLFGGGMGIGLVFWSVAEPIMHFNSPPFGEPGTVEAMQTSMRVVFFHWGIHAWVNFAIAGLALAYFQFRKGLPFLISSAFYPLIGDRIYGPIGKAIDILAVFATIFGIATSLGLGSSQIATGIQYIWGIPAGPLTISLVIAVITVIFTLATVSGLHKAMQSIANVKVWLSVAFMVFIFYFGGKVFILNTFTQSLGDYLQNFVGQTFWMANESWVGGWTIFYWAWWIAWAPFVGQFVARVSKGRTIREFVFAVTLLPVGFSFIWLAIYGGAAFNLDQISGGFIQNAVNADYTTALFALLQQMPLYAITGPLAILLIVTCFVGAADSATYVLAMLTSNGDMDPSKKLRSFWGIMQGAMTIVLIVVGGTAALKALQTASIASAFPFMLIMLVMCYSILKALRSDHP</sequence>
<evidence type="ECO:0000255" key="1"/>
<evidence type="ECO:0000269" key="2">
    <source>
    </source>
</evidence>
<evidence type="ECO:0000303" key="3">
    <source>
    </source>
</evidence>
<evidence type="ECO:0000305" key="4"/>
<evidence type="ECO:0000305" key="5">
    <source>
    </source>
</evidence>
<evidence type="ECO:0000312" key="6">
    <source>
        <dbReference type="EMBL" id="BAE84943.1"/>
    </source>
</evidence>
<name>GBT_DESHY</name>
<gene>
    <name evidence="6" type="ordered locus">DSY3154</name>
</gene>
<protein>
    <recommendedName>
        <fullName evidence="3">Probable glycine betaine transporter</fullName>
    </recommendedName>
</protein>
<dbReference type="EMBL" id="AP008230">
    <property type="protein sequence ID" value="BAE84943.1"/>
    <property type="molecule type" value="Genomic_DNA"/>
</dbReference>
<dbReference type="SMR" id="Q24SP9"/>
<dbReference type="STRING" id="138119.DSY3154"/>
<dbReference type="KEGG" id="dsy:DSY3154"/>
<dbReference type="eggNOG" id="COG1292">
    <property type="taxonomic scope" value="Bacteria"/>
</dbReference>
<dbReference type="HOGENOM" id="CLU_010118_5_0_9"/>
<dbReference type="Proteomes" id="UP000001946">
    <property type="component" value="Chromosome"/>
</dbReference>
<dbReference type="GO" id="GO:0005886">
    <property type="term" value="C:plasma membrane"/>
    <property type="evidence" value="ECO:0007669"/>
    <property type="project" value="UniProtKB-SubCell"/>
</dbReference>
<dbReference type="GO" id="GO:0022857">
    <property type="term" value="F:transmembrane transporter activity"/>
    <property type="evidence" value="ECO:0007669"/>
    <property type="project" value="InterPro"/>
</dbReference>
<dbReference type="InterPro" id="IPR018093">
    <property type="entry name" value="BCCT_CS"/>
</dbReference>
<dbReference type="InterPro" id="IPR000060">
    <property type="entry name" value="BCCT_transptr"/>
</dbReference>
<dbReference type="NCBIfam" id="TIGR00842">
    <property type="entry name" value="bcct"/>
    <property type="match status" value="1"/>
</dbReference>
<dbReference type="PANTHER" id="PTHR30047:SF7">
    <property type="entry name" value="HIGH-AFFINITY CHOLINE TRANSPORT PROTEIN"/>
    <property type="match status" value="1"/>
</dbReference>
<dbReference type="PANTHER" id="PTHR30047">
    <property type="entry name" value="HIGH-AFFINITY CHOLINE TRANSPORT PROTEIN-RELATED"/>
    <property type="match status" value="1"/>
</dbReference>
<dbReference type="Pfam" id="PF02028">
    <property type="entry name" value="BCCT"/>
    <property type="match status" value="1"/>
</dbReference>
<dbReference type="PROSITE" id="PS01303">
    <property type="entry name" value="BCCT"/>
    <property type="match status" value="1"/>
</dbReference>
<organism>
    <name type="scientific">Desulfitobacterium hafniense (strain Y51)</name>
    <dbReference type="NCBI Taxonomy" id="138119"/>
    <lineage>
        <taxon>Bacteria</taxon>
        <taxon>Bacillati</taxon>
        <taxon>Bacillota</taxon>
        <taxon>Clostridia</taxon>
        <taxon>Eubacteriales</taxon>
        <taxon>Desulfitobacteriaceae</taxon>
        <taxon>Desulfitobacterium</taxon>
    </lineage>
</organism>
<proteinExistence type="evidence at transcript level"/>
<accession>Q24SP9</accession>
<feature type="chain" id="PRO_0000441380" description="Probable glycine betaine transporter">
    <location>
        <begin position="1"/>
        <end position="496"/>
    </location>
</feature>
<feature type="transmembrane region" description="Helical" evidence="1">
    <location>
        <begin position="11"/>
        <end position="31"/>
    </location>
</feature>
<feature type="transmembrane region" description="Helical" evidence="1">
    <location>
        <begin position="49"/>
        <end position="69"/>
    </location>
</feature>
<feature type="transmembrane region" description="Helical" evidence="1">
    <location>
        <begin position="89"/>
        <end position="109"/>
    </location>
</feature>
<feature type="transmembrane region" description="Helical" evidence="1">
    <location>
        <begin position="136"/>
        <end position="156"/>
    </location>
</feature>
<feature type="transmembrane region" description="Helical" evidence="1">
    <location>
        <begin position="188"/>
        <end position="208"/>
    </location>
</feature>
<feature type="transmembrane region" description="Helical" evidence="1">
    <location>
        <begin position="219"/>
        <end position="239"/>
    </location>
</feature>
<feature type="transmembrane region" description="Helical" evidence="1">
    <location>
        <begin position="260"/>
        <end position="280"/>
    </location>
</feature>
<feature type="transmembrane region" description="Helical" evidence="1">
    <location>
        <begin position="306"/>
        <end position="326"/>
    </location>
</feature>
<feature type="transmembrane region" description="Helical" evidence="1">
    <location>
        <begin position="341"/>
        <end position="361"/>
    </location>
</feature>
<feature type="transmembrane region" description="Helical" evidence="1">
    <location>
        <begin position="396"/>
        <end position="416"/>
    </location>
</feature>
<feature type="transmembrane region" description="Helical" evidence="1">
    <location>
        <begin position="441"/>
        <end position="461"/>
    </location>
</feature>
<feature type="transmembrane region" description="Helical" evidence="1">
    <location>
        <begin position="468"/>
        <end position="488"/>
    </location>
</feature>
<comment type="function">
    <text evidence="5">Probably acts in the uptake of glycine betaine. May function in the pathway that allows anaerobic methylotrophic growth of D.hafniense using glycine betaine.</text>
</comment>
<comment type="subcellular location">
    <subcellularLocation>
        <location evidence="1">Cell membrane</location>
        <topology evidence="1">Multi-pass membrane protein</topology>
    </subcellularLocation>
</comment>
<comment type="induction">
    <text evidence="2">Highly up-regulated during growth on glycine betaine.</text>
</comment>
<comment type="similarity">
    <text evidence="4">Belongs to the BCCT transporter (TC 2.A.15) family.</text>
</comment>
<keyword id="KW-1003">Cell membrane</keyword>
<keyword id="KW-0472">Membrane</keyword>
<keyword id="KW-1185">Reference proteome</keyword>
<keyword id="KW-0812">Transmembrane</keyword>
<keyword id="KW-1133">Transmembrane helix</keyword>
<keyword id="KW-0813">Transport</keyword>
<reference key="1">
    <citation type="journal article" date="2006" name="J. Bacteriol.">
        <title>Complete genome sequence of the dehalorespiring bacterium Desulfitobacterium hafniense Y51 and comparison with Dehalococcoides ethenogenes 195.</title>
        <authorList>
            <person name="Nonaka H."/>
            <person name="Keresztes G."/>
            <person name="Shinoda Y."/>
            <person name="Ikenaga Y."/>
            <person name="Abe M."/>
            <person name="Naito K."/>
            <person name="Inatomi K."/>
            <person name="Furukawa K."/>
            <person name="Inui M."/>
            <person name="Yukawa H."/>
        </authorList>
    </citation>
    <scope>NUCLEOTIDE SEQUENCE [LARGE SCALE GENOMIC DNA]</scope>
    <source>
        <strain>Y51</strain>
    </source>
</reference>
<reference key="2">
    <citation type="journal article" date="2014" name="Proc. Natl. Acad. Sci. U.S.A.">
        <title>A nonpyrrolysine member of the widely distributed trimethylamine methyltransferase family is a glycine betaine methyltransferase.</title>
        <authorList>
            <person name="Ticak T."/>
            <person name="Kountz D.J."/>
            <person name="Girosky K.E."/>
            <person name="Krzycki J.A."/>
            <person name="Ferguson D.J. Jr."/>
        </authorList>
    </citation>
    <scope>FUNCTION</scope>
    <scope>INDUCTION</scope>
    <source>
        <strain>Y51</strain>
    </source>
</reference>